<accession>Q8CU19</accession>
<keyword id="KW-1003">Cell membrane</keyword>
<keyword id="KW-0449">Lipoprotein</keyword>
<keyword id="KW-0472">Membrane</keyword>
<keyword id="KW-0564">Palmitate</keyword>
<keyword id="KW-0732">Signal</keyword>
<gene>
    <name type="ordered locus">SE_0144</name>
</gene>
<proteinExistence type="inferred from homology"/>
<dbReference type="EMBL" id="AE015929">
    <property type="protein sequence ID" value="AAO03741.1"/>
    <property type="molecule type" value="Genomic_DNA"/>
</dbReference>
<dbReference type="RefSeq" id="NP_763699.1">
    <property type="nucleotide sequence ID" value="NC_004461.1"/>
</dbReference>
<dbReference type="RefSeq" id="WP_002485676.1">
    <property type="nucleotide sequence ID" value="NC_004461.1"/>
</dbReference>
<dbReference type="SMR" id="Q8CU19"/>
<dbReference type="KEGG" id="sep:SE_0144"/>
<dbReference type="PATRIC" id="fig|176280.10.peg.134"/>
<dbReference type="eggNOG" id="ENOG5033UD8">
    <property type="taxonomic scope" value="Bacteria"/>
</dbReference>
<dbReference type="HOGENOM" id="CLU_071589_0_1_9"/>
<dbReference type="OrthoDB" id="2189886at2"/>
<dbReference type="Proteomes" id="UP000001411">
    <property type="component" value="Chromosome"/>
</dbReference>
<dbReference type="GO" id="GO:0005886">
    <property type="term" value="C:plasma membrane"/>
    <property type="evidence" value="ECO:0007669"/>
    <property type="project" value="UniProtKB-SubCell"/>
</dbReference>
<dbReference type="Gene3D" id="2.50.20.40">
    <property type="match status" value="1"/>
</dbReference>
<dbReference type="InterPro" id="IPR007595">
    <property type="entry name" value="Csa"/>
</dbReference>
<dbReference type="InterPro" id="IPR038641">
    <property type="entry name" value="Csa_sf"/>
</dbReference>
<dbReference type="NCBIfam" id="TIGR01742">
    <property type="entry name" value="SA_tandem_lipo"/>
    <property type="match status" value="1"/>
</dbReference>
<dbReference type="Pfam" id="PF04507">
    <property type="entry name" value="DUF576"/>
    <property type="match status" value="1"/>
</dbReference>
<dbReference type="PROSITE" id="PS51257">
    <property type="entry name" value="PROKAR_LIPOPROTEIN"/>
    <property type="match status" value="1"/>
</dbReference>
<name>Y144_STAES</name>
<protein>
    <recommendedName>
        <fullName>Uncharacterized lipoprotein SE_0144</fullName>
    </recommendedName>
</protein>
<organism>
    <name type="scientific">Staphylococcus epidermidis (strain ATCC 12228 / FDA PCI 1200)</name>
    <dbReference type="NCBI Taxonomy" id="176280"/>
    <lineage>
        <taxon>Bacteria</taxon>
        <taxon>Bacillati</taxon>
        <taxon>Bacillota</taxon>
        <taxon>Bacilli</taxon>
        <taxon>Bacillales</taxon>
        <taxon>Staphylococcaceae</taxon>
        <taxon>Staphylococcus</taxon>
    </lineage>
</organism>
<feature type="signal peptide" evidence="1">
    <location>
        <begin position="1"/>
        <end position="19"/>
    </location>
</feature>
<feature type="chain" id="PRO_0000282193" description="Uncharacterized lipoprotein SE_0144">
    <location>
        <begin position="20"/>
        <end position="251"/>
    </location>
</feature>
<feature type="lipid moiety-binding region" description="N-palmitoyl cysteine" evidence="1">
    <location>
        <position position="20"/>
    </location>
</feature>
<feature type="lipid moiety-binding region" description="S-diacylglycerol cysteine" evidence="1">
    <location>
        <position position="20"/>
    </location>
</feature>
<comment type="subcellular location">
    <subcellularLocation>
        <location evidence="1">Cell membrane</location>
        <topology evidence="1">Lipid-anchor</topology>
    </subcellularLocation>
</comment>
<comment type="similarity">
    <text evidence="2">Belongs to the staphylococcal tandem lipoprotein family.</text>
</comment>
<reference key="1">
    <citation type="journal article" date="2003" name="Mol. Microbiol.">
        <title>Genome-based analysis of virulence genes in a non-biofilm-forming Staphylococcus epidermidis strain (ATCC 12228).</title>
        <authorList>
            <person name="Zhang Y.-Q."/>
            <person name="Ren S.-X."/>
            <person name="Li H.-L."/>
            <person name="Wang Y.-X."/>
            <person name="Fu G."/>
            <person name="Yang J."/>
            <person name="Qin Z.-Q."/>
            <person name="Miao Y.-G."/>
            <person name="Wang W.-Y."/>
            <person name="Chen R.-S."/>
            <person name="Shen Y."/>
            <person name="Chen Z."/>
            <person name="Yuan Z.-H."/>
            <person name="Zhao G.-P."/>
            <person name="Qu D."/>
            <person name="Danchin A."/>
            <person name="Wen Y.-M."/>
        </authorList>
    </citation>
    <scope>NUCLEOTIDE SEQUENCE [LARGE SCALE GENOMIC DNA]</scope>
    <source>
        <strain>ATCC 12228 / FDA PCI 1200</strain>
    </source>
</reference>
<evidence type="ECO:0000255" key="1">
    <source>
        <dbReference type="PROSITE-ProRule" id="PRU00303"/>
    </source>
</evidence>
<evidence type="ECO:0000305" key="2"/>
<sequence length="251" mass="29369">MRYLKRITIYISLLILVSGCGNNKEAEIKQNFNKTLSMYPIKNLENFYDKEGFRDEEFDKDDKGTWIINSKMIVEPKGKDMEARGMVLHINRNTRTTKGDFIIKRITEDNKGIPDVKDKKYPVKMENNKIIPTKQIKDKKLKKEIENFKFFVQYGNFKNLKHYKDGEISYNPNVPSYSAKYQLSNNGYNVKQLRKRYDIPTNQAPKLLLKGTGDLKGSSVGYNHLEFTFVENKKENIYFTDSINFNPSRGD</sequence>